<proteinExistence type="inferred from homology"/>
<evidence type="ECO:0000255" key="1">
    <source>
        <dbReference type="HAMAP-Rule" id="MF_00197"/>
    </source>
</evidence>
<feature type="chain" id="PRO_1000058543" description="Diaminopimelate epimerase">
    <location>
        <begin position="1"/>
        <end position="274"/>
    </location>
</feature>
<feature type="active site" description="Proton donor" evidence="1">
    <location>
        <position position="73"/>
    </location>
</feature>
<feature type="active site" description="Proton acceptor" evidence="1">
    <location>
        <position position="217"/>
    </location>
</feature>
<feature type="binding site" evidence="1">
    <location>
        <position position="11"/>
    </location>
    <ligand>
        <name>substrate</name>
    </ligand>
</feature>
<feature type="binding site" evidence="1">
    <location>
        <position position="44"/>
    </location>
    <ligand>
        <name>substrate</name>
    </ligand>
</feature>
<feature type="binding site" evidence="1">
    <location>
        <position position="64"/>
    </location>
    <ligand>
        <name>substrate</name>
    </ligand>
</feature>
<feature type="binding site" evidence="1">
    <location>
        <begin position="74"/>
        <end position="75"/>
    </location>
    <ligand>
        <name>substrate</name>
    </ligand>
</feature>
<feature type="binding site" evidence="1">
    <location>
        <position position="157"/>
    </location>
    <ligand>
        <name>substrate</name>
    </ligand>
</feature>
<feature type="binding site" evidence="1">
    <location>
        <position position="190"/>
    </location>
    <ligand>
        <name>substrate</name>
    </ligand>
</feature>
<feature type="binding site" evidence="1">
    <location>
        <begin position="208"/>
        <end position="209"/>
    </location>
    <ligand>
        <name>substrate</name>
    </ligand>
</feature>
<feature type="binding site" evidence="1">
    <location>
        <begin position="218"/>
        <end position="219"/>
    </location>
    <ligand>
        <name>substrate</name>
    </ligand>
</feature>
<feature type="site" description="Could be important to modulate the pK values of the two catalytic cysteine residues" evidence="1">
    <location>
        <position position="159"/>
    </location>
</feature>
<feature type="site" description="Could be important to modulate the pK values of the two catalytic cysteine residues" evidence="1">
    <location>
        <position position="208"/>
    </location>
</feature>
<feature type="site" description="Important for dimerization" evidence="1">
    <location>
        <position position="268"/>
    </location>
</feature>
<protein>
    <recommendedName>
        <fullName evidence="1">Diaminopimelate epimerase</fullName>
        <shortName evidence="1">DAP epimerase</shortName>
        <ecNumber evidence="1">5.1.1.7</ecNumber>
    </recommendedName>
    <alternativeName>
        <fullName evidence="1">PLP-independent amino acid racemase</fullName>
    </alternativeName>
</protein>
<accession>A4WG08</accession>
<organism>
    <name type="scientific">Enterobacter sp. (strain 638)</name>
    <dbReference type="NCBI Taxonomy" id="399742"/>
    <lineage>
        <taxon>Bacteria</taxon>
        <taxon>Pseudomonadati</taxon>
        <taxon>Pseudomonadota</taxon>
        <taxon>Gammaproteobacteria</taxon>
        <taxon>Enterobacterales</taxon>
        <taxon>Enterobacteriaceae</taxon>
        <taxon>Enterobacter</taxon>
    </lineage>
</organism>
<reference key="1">
    <citation type="journal article" date="2010" name="PLoS Genet.">
        <title>Genome sequence of the plant growth promoting endophytic bacterium Enterobacter sp. 638.</title>
        <authorList>
            <person name="Taghavi S."/>
            <person name="van der Lelie D."/>
            <person name="Hoffman A."/>
            <person name="Zhang Y.B."/>
            <person name="Walla M.D."/>
            <person name="Vangronsveld J."/>
            <person name="Newman L."/>
            <person name="Monchy S."/>
        </authorList>
    </citation>
    <scope>NUCLEOTIDE SEQUENCE [LARGE SCALE GENOMIC DNA]</scope>
    <source>
        <strain>638</strain>
    </source>
</reference>
<name>DAPF_ENT38</name>
<gene>
    <name evidence="1" type="primary">dapF</name>
    <name type="ordered locus">Ent638_3983</name>
</gene>
<keyword id="KW-0028">Amino-acid biosynthesis</keyword>
<keyword id="KW-0963">Cytoplasm</keyword>
<keyword id="KW-0413">Isomerase</keyword>
<keyword id="KW-0457">Lysine biosynthesis</keyword>
<comment type="function">
    <text evidence="1">Catalyzes the stereoinversion of LL-2,6-diaminopimelate (L,L-DAP) to meso-diaminopimelate (meso-DAP), a precursor of L-lysine and an essential component of the bacterial peptidoglycan.</text>
</comment>
<comment type="catalytic activity">
    <reaction evidence="1">
        <text>(2S,6S)-2,6-diaminopimelate = meso-2,6-diaminopimelate</text>
        <dbReference type="Rhea" id="RHEA:15393"/>
        <dbReference type="ChEBI" id="CHEBI:57609"/>
        <dbReference type="ChEBI" id="CHEBI:57791"/>
        <dbReference type="EC" id="5.1.1.7"/>
    </reaction>
</comment>
<comment type="pathway">
    <text evidence="1">Amino-acid biosynthesis; L-lysine biosynthesis via DAP pathway; DL-2,6-diaminopimelate from LL-2,6-diaminopimelate: step 1/1.</text>
</comment>
<comment type="subunit">
    <text evidence="1">Homodimer.</text>
</comment>
<comment type="subcellular location">
    <subcellularLocation>
        <location evidence="1">Cytoplasm</location>
    </subcellularLocation>
</comment>
<comment type="similarity">
    <text evidence="1">Belongs to the diaminopimelate epimerase family.</text>
</comment>
<dbReference type="EC" id="5.1.1.7" evidence="1"/>
<dbReference type="EMBL" id="CP000653">
    <property type="protein sequence ID" value="ABP62638.1"/>
    <property type="molecule type" value="Genomic_DNA"/>
</dbReference>
<dbReference type="RefSeq" id="WP_015960943.1">
    <property type="nucleotide sequence ID" value="NC_009436.1"/>
</dbReference>
<dbReference type="SMR" id="A4WG08"/>
<dbReference type="STRING" id="399742.Ent638_3983"/>
<dbReference type="KEGG" id="ent:Ent638_3983"/>
<dbReference type="eggNOG" id="COG0253">
    <property type="taxonomic scope" value="Bacteria"/>
</dbReference>
<dbReference type="HOGENOM" id="CLU_053306_1_1_6"/>
<dbReference type="OrthoDB" id="9805408at2"/>
<dbReference type="UniPathway" id="UPA00034">
    <property type="reaction ID" value="UER00025"/>
</dbReference>
<dbReference type="Proteomes" id="UP000000230">
    <property type="component" value="Chromosome"/>
</dbReference>
<dbReference type="GO" id="GO:0005829">
    <property type="term" value="C:cytosol"/>
    <property type="evidence" value="ECO:0007669"/>
    <property type="project" value="TreeGrafter"/>
</dbReference>
<dbReference type="GO" id="GO:0008837">
    <property type="term" value="F:diaminopimelate epimerase activity"/>
    <property type="evidence" value="ECO:0007669"/>
    <property type="project" value="UniProtKB-UniRule"/>
</dbReference>
<dbReference type="GO" id="GO:0009089">
    <property type="term" value="P:lysine biosynthetic process via diaminopimelate"/>
    <property type="evidence" value="ECO:0007669"/>
    <property type="project" value="UniProtKB-UniRule"/>
</dbReference>
<dbReference type="FunFam" id="3.10.310.10:FF:000001">
    <property type="entry name" value="Diaminopimelate epimerase"/>
    <property type="match status" value="1"/>
</dbReference>
<dbReference type="FunFam" id="3.10.310.10:FF:000002">
    <property type="entry name" value="Diaminopimelate epimerase"/>
    <property type="match status" value="1"/>
</dbReference>
<dbReference type="Gene3D" id="3.10.310.10">
    <property type="entry name" value="Diaminopimelate Epimerase, Chain A, domain 1"/>
    <property type="match status" value="2"/>
</dbReference>
<dbReference type="HAMAP" id="MF_00197">
    <property type="entry name" value="DAP_epimerase"/>
    <property type="match status" value="1"/>
</dbReference>
<dbReference type="InterPro" id="IPR018510">
    <property type="entry name" value="DAP_epimerase_AS"/>
</dbReference>
<dbReference type="InterPro" id="IPR001653">
    <property type="entry name" value="DAP_epimerase_DapF"/>
</dbReference>
<dbReference type="NCBIfam" id="TIGR00652">
    <property type="entry name" value="DapF"/>
    <property type="match status" value="1"/>
</dbReference>
<dbReference type="PANTHER" id="PTHR31689:SF0">
    <property type="entry name" value="DIAMINOPIMELATE EPIMERASE"/>
    <property type="match status" value="1"/>
</dbReference>
<dbReference type="PANTHER" id="PTHR31689">
    <property type="entry name" value="DIAMINOPIMELATE EPIMERASE, CHLOROPLASTIC"/>
    <property type="match status" value="1"/>
</dbReference>
<dbReference type="Pfam" id="PF01678">
    <property type="entry name" value="DAP_epimerase"/>
    <property type="match status" value="2"/>
</dbReference>
<dbReference type="SUPFAM" id="SSF54506">
    <property type="entry name" value="Diaminopimelate epimerase-like"/>
    <property type="match status" value="1"/>
</dbReference>
<dbReference type="PROSITE" id="PS01326">
    <property type="entry name" value="DAP_EPIMERASE"/>
    <property type="match status" value="1"/>
</dbReference>
<sequence length="274" mass="30178">MQFSKMHGLGNDFMVVDAVTQNVFFSPELIRRLADRHVGVGFDQLLVVEPPYDPDLDFHYRIFNADGSEVSQCGNGARCFARFVRLKGLTNKRDICVSTANGRMILSVTDDELVRVNMGEPNFEPSAVPFRAIKAEKTYIMRASEQTVLCGVVSMGNPHCVIQVDDVDTAAVEILGPIMESHERFPERANIGFMQVMKREHIRLRVYERGAGETRACGSGACAAVAVGISQGLLAEEVRVELPGGRLDIAWKGPGHPLFMTGPAAHVYDGFIHL</sequence>